<dbReference type="EMBL" id="AE001363">
    <property type="protein sequence ID" value="AAD18622.1"/>
    <property type="molecule type" value="Genomic_DNA"/>
</dbReference>
<dbReference type="EMBL" id="AE002161">
    <property type="protein sequence ID" value="AAF38132.1"/>
    <property type="molecule type" value="Genomic_DNA"/>
</dbReference>
<dbReference type="EMBL" id="BA000008">
    <property type="protein sequence ID" value="BAA98688.1"/>
    <property type="molecule type" value="Genomic_DNA"/>
</dbReference>
<dbReference type="EMBL" id="AE009440">
    <property type="protein sequence ID" value="AAP98431.1"/>
    <property type="status" value="ALT_INIT"/>
    <property type="molecule type" value="Genomic_DNA"/>
</dbReference>
<dbReference type="PIR" id="F72073">
    <property type="entry name" value="F72073"/>
</dbReference>
<dbReference type="PIR" id="F86550">
    <property type="entry name" value="F86550"/>
</dbReference>
<dbReference type="PIR" id="G81595">
    <property type="entry name" value="G81595"/>
</dbReference>
<dbReference type="RefSeq" id="NP_224678.1">
    <property type="nucleotide sequence ID" value="NC_000922.1"/>
</dbReference>
<dbReference type="RefSeq" id="WP_010883120.1">
    <property type="nucleotide sequence ID" value="NZ_LN847257.1"/>
</dbReference>
<dbReference type="RefSeq" id="WP_010892009.1">
    <property type="nucleotide sequence ID" value="NZ_LN846995.1"/>
</dbReference>
<dbReference type="PDB" id="3N26">
    <property type="method" value="X-ray"/>
    <property type="resolution" value="2.10 A"/>
    <property type="chains" value="A=23-259"/>
</dbReference>
<dbReference type="PDB" id="3QAX">
    <property type="method" value="X-ray"/>
    <property type="resolution" value="2.00 A"/>
    <property type="chains" value="A/B=1-259"/>
</dbReference>
<dbReference type="PDBsum" id="3N26"/>
<dbReference type="PDBsum" id="3QAX"/>
<dbReference type="SMR" id="Q9Z869"/>
<dbReference type="STRING" id="406984.CPK_ORF00998"/>
<dbReference type="GeneID" id="45050527"/>
<dbReference type="KEGG" id="cpa:CP_0272"/>
<dbReference type="KEGG" id="cpj:artJ"/>
<dbReference type="KEGG" id="cpn:CPn_0482"/>
<dbReference type="KEGG" id="cpt:CpB0502"/>
<dbReference type="PATRIC" id="fig|115713.3.peg.540"/>
<dbReference type="eggNOG" id="COG0834">
    <property type="taxonomic scope" value="Bacteria"/>
</dbReference>
<dbReference type="HOGENOM" id="CLU_019602_18_2_0"/>
<dbReference type="OrthoDB" id="9774451at2"/>
<dbReference type="EvolutionaryTrace" id="Q9Z869"/>
<dbReference type="Proteomes" id="UP000000583">
    <property type="component" value="Chromosome"/>
</dbReference>
<dbReference type="Proteomes" id="UP000000801">
    <property type="component" value="Chromosome"/>
</dbReference>
<dbReference type="GO" id="GO:0009986">
    <property type="term" value="C:cell surface"/>
    <property type="evidence" value="ECO:0007669"/>
    <property type="project" value="UniProtKB-SubCell"/>
</dbReference>
<dbReference type="GO" id="GO:0005576">
    <property type="term" value="C:extracellular region"/>
    <property type="evidence" value="ECO:0007669"/>
    <property type="project" value="UniProtKB-SubCell"/>
</dbReference>
<dbReference type="GO" id="GO:0006865">
    <property type="term" value="P:amino acid transport"/>
    <property type="evidence" value="ECO:0007669"/>
    <property type="project" value="UniProtKB-KW"/>
</dbReference>
<dbReference type="CDD" id="cd00999">
    <property type="entry name" value="PBP2_ArtJ"/>
    <property type="match status" value="1"/>
</dbReference>
<dbReference type="Gene3D" id="3.40.190.10">
    <property type="entry name" value="Periplasmic binding protein-like II"/>
    <property type="match status" value="2"/>
</dbReference>
<dbReference type="InterPro" id="IPR037297">
    <property type="entry name" value="ArtJ_PBP2"/>
</dbReference>
<dbReference type="InterPro" id="IPR001638">
    <property type="entry name" value="Solute-binding_3/MltF_N"/>
</dbReference>
<dbReference type="PANTHER" id="PTHR35936:SF17">
    <property type="entry name" value="ARGININE-BINDING EXTRACELLULAR PROTEIN ARTP"/>
    <property type="match status" value="1"/>
</dbReference>
<dbReference type="PANTHER" id="PTHR35936">
    <property type="entry name" value="MEMBRANE-BOUND LYTIC MUREIN TRANSGLYCOSYLASE F"/>
    <property type="match status" value="1"/>
</dbReference>
<dbReference type="Pfam" id="PF00497">
    <property type="entry name" value="SBP_bac_3"/>
    <property type="match status" value="1"/>
</dbReference>
<dbReference type="SMART" id="SM00062">
    <property type="entry name" value="PBPb"/>
    <property type="match status" value="1"/>
</dbReference>
<dbReference type="SUPFAM" id="SSF53850">
    <property type="entry name" value="Periplasmic binding protein-like II"/>
    <property type="match status" value="1"/>
</dbReference>
<dbReference type="PROSITE" id="PS51257">
    <property type="entry name" value="PROKAR_LIPOPROTEIN"/>
    <property type="match status" value="1"/>
</dbReference>
<gene>
    <name evidence="5" type="primary">artJ</name>
    <name type="ordered locus">CPn_0482</name>
    <name type="ordered locus">CP_0272</name>
    <name type="ordered locus">CPj0482</name>
    <name type="ordered locus">CpB0502</name>
</gene>
<proteinExistence type="evidence at protein level"/>
<feature type="signal peptide" evidence="2">
    <location>
        <begin position="1"/>
        <end position="25"/>
    </location>
</feature>
<feature type="chain" id="PRO_0000403377" description="Probable ABC transporter arginine-binding protein ArtJ">
    <location>
        <begin position="26"/>
        <end position="259"/>
    </location>
</feature>
<feature type="binding site" evidence="4 7 8">
    <location>
        <position position="38"/>
    </location>
    <ligand>
        <name>L-arginine</name>
        <dbReference type="ChEBI" id="CHEBI:32682"/>
    </ligand>
</feature>
<feature type="binding site" evidence="4 7 8">
    <location>
        <position position="45"/>
    </location>
    <ligand>
        <name>L-arginine</name>
        <dbReference type="ChEBI" id="CHEBI:32682"/>
    </ligand>
</feature>
<feature type="binding site" evidence="4 7 8">
    <location>
        <position position="96"/>
    </location>
    <ligand>
        <name>L-arginine</name>
        <dbReference type="ChEBI" id="CHEBI:32682"/>
    </ligand>
</feature>
<feature type="binding site" evidence="4 7 8">
    <location>
        <position position="97"/>
    </location>
    <ligand>
        <name>L-arginine</name>
        <dbReference type="ChEBI" id="CHEBI:32682"/>
    </ligand>
</feature>
<feature type="binding site" evidence="4 7 8">
    <location>
        <position position="99"/>
    </location>
    <ligand>
        <name>L-arginine</name>
        <dbReference type="ChEBI" id="CHEBI:32682"/>
    </ligand>
</feature>
<feature type="binding site" evidence="4 7 8">
    <location>
        <position position="104"/>
    </location>
    <ligand>
        <name>L-arginine</name>
        <dbReference type="ChEBI" id="CHEBI:32682"/>
    </ligand>
</feature>
<feature type="binding site" evidence="4 7 8">
    <location>
        <position position="149"/>
    </location>
    <ligand>
        <name>L-arginine</name>
        <dbReference type="ChEBI" id="CHEBI:32682"/>
    </ligand>
</feature>
<feature type="sequence variant" description="In strain: AR39 and J138.">
    <original>Y</original>
    <variation>H</variation>
    <location>
        <position position="139"/>
    </location>
</feature>
<feature type="strand" evidence="9">
    <location>
        <begin position="32"/>
        <end position="37"/>
    </location>
</feature>
<feature type="turn" evidence="9">
    <location>
        <begin position="42"/>
        <end position="44"/>
    </location>
</feature>
<feature type="strand" evidence="9">
    <location>
        <begin position="45"/>
        <end position="47"/>
    </location>
</feature>
<feature type="strand" evidence="9">
    <location>
        <begin position="53"/>
        <end position="55"/>
    </location>
</feature>
<feature type="helix" evidence="9">
    <location>
        <begin position="56"/>
        <end position="68"/>
    </location>
</feature>
<feature type="strand" evidence="9">
    <location>
        <begin position="71"/>
        <end position="76"/>
    </location>
</feature>
<feature type="helix" evidence="9">
    <location>
        <begin position="79"/>
        <end position="81"/>
    </location>
</feature>
<feature type="helix" evidence="9">
    <location>
        <begin position="82"/>
        <end position="87"/>
    </location>
</feature>
<feature type="strand" evidence="9">
    <location>
        <begin position="90"/>
        <end position="94"/>
    </location>
</feature>
<feature type="helix" evidence="9">
    <location>
        <begin position="102"/>
        <end position="105"/>
    </location>
</feature>
<feature type="strand" evidence="9">
    <location>
        <begin position="108"/>
        <end position="114"/>
    </location>
</feature>
<feature type="strand" evidence="9">
    <location>
        <begin position="120"/>
        <end position="126"/>
    </location>
</feature>
<feature type="helix" evidence="9">
    <location>
        <begin position="136"/>
        <end position="138"/>
    </location>
</feature>
<feature type="strand" evidence="9">
    <location>
        <begin position="142"/>
        <end position="145"/>
    </location>
</feature>
<feature type="helix" evidence="9">
    <location>
        <begin position="149"/>
        <end position="155"/>
    </location>
</feature>
<feature type="strand" evidence="9">
    <location>
        <begin position="162"/>
        <end position="166"/>
    </location>
</feature>
<feature type="helix" evidence="9">
    <location>
        <begin position="168"/>
        <end position="176"/>
    </location>
</feature>
<feature type="strand" evidence="9">
    <location>
        <begin position="179"/>
        <end position="185"/>
    </location>
</feature>
<feature type="helix" evidence="9">
    <location>
        <begin position="187"/>
        <end position="193"/>
    </location>
</feature>
<feature type="helix" evidence="9">
    <location>
        <begin position="194"/>
        <end position="196"/>
    </location>
</feature>
<feature type="strand" evidence="9">
    <location>
        <begin position="200"/>
        <end position="206"/>
    </location>
</feature>
<feature type="helix" evidence="9">
    <location>
        <begin position="209"/>
        <end position="211"/>
    </location>
</feature>
<feature type="strand" evidence="9">
    <location>
        <begin position="216"/>
        <end position="220"/>
    </location>
</feature>
<feature type="helix" evidence="9">
    <location>
        <begin position="225"/>
        <end position="240"/>
    </location>
</feature>
<feature type="helix" evidence="9">
    <location>
        <begin position="243"/>
        <end position="250"/>
    </location>
</feature>
<accession>Q9Z869</accession>
<accession>Q7AIQ4</accession>
<accession>Q7VQ00</accession>
<accession>Q9JS59</accession>
<protein>
    <recommendedName>
        <fullName evidence="6">Probable ABC transporter arginine-binding protein ArtJ</fullName>
    </recommendedName>
</protein>
<organism>
    <name type="scientific">Chlamydia pneumoniae</name>
    <name type="common">Chlamydophila pneumoniae</name>
    <dbReference type="NCBI Taxonomy" id="83558"/>
    <lineage>
        <taxon>Bacteria</taxon>
        <taxon>Pseudomonadati</taxon>
        <taxon>Chlamydiota</taxon>
        <taxon>Chlamydiia</taxon>
        <taxon>Chlamydiales</taxon>
        <taxon>Chlamydiaceae</taxon>
        <taxon>Chlamydia/Chlamydophila group</taxon>
        <taxon>Chlamydia</taxon>
    </lineage>
</organism>
<name>ARTJ_CHLPN</name>
<sequence length="259" mass="29070">MIKQIGRFFRAFIFIMPLSLTSCESKIDRNRIWIVGTNATYPPFEYVDAQGEVVGFDIDLAKAISEKLGKQLEVREFAFDALILNLKKHRIDAILAGMSITPSRQKEIALLPYYGDEVQELMVVSKRSLETPVLPLTQYSSVAVQTGTFQEHYLLSQPGICVRSFDSTLEVIMEVRYGKSPVAVLEPSVGRVVLKDFPNLVATRLELPPECWVLGCGLGVAKDRPEEIQTIQQAITDLKSEGVIQSLTKKWQLSEVAYE</sequence>
<evidence type="ECO:0000250" key="1">
    <source>
        <dbReference type="UniProtKB" id="P30860"/>
    </source>
</evidence>
<evidence type="ECO:0000255" key="2"/>
<evidence type="ECO:0000269" key="3">
    <source>
    </source>
</evidence>
<evidence type="ECO:0000269" key="4">
    <source>
    </source>
</evidence>
<evidence type="ECO:0000303" key="5">
    <source>
    </source>
</evidence>
<evidence type="ECO:0000305" key="6"/>
<evidence type="ECO:0007744" key="7">
    <source>
        <dbReference type="PDB" id="3N26"/>
    </source>
</evidence>
<evidence type="ECO:0007744" key="8">
    <source>
        <dbReference type="PDB" id="3QAX"/>
    </source>
</evidence>
<evidence type="ECO:0007829" key="9">
    <source>
        <dbReference type="PDB" id="3QAX"/>
    </source>
</evidence>
<comment type="function">
    <text evidence="1 4">Probably part of an ABC transporter complex involved in arginine transport (By similarity). Binds arginine (PubMed:20592031). Interacts with host epithelial cells, suggesting a role in host-cell adhesion during infection (PubMed:20592031).</text>
</comment>
<comment type="subcellular location">
    <subcellularLocation>
        <location evidence="3">Secreted</location>
    </subcellularLocation>
    <subcellularLocation>
        <location evidence="3">Cell surface</location>
    </subcellularLocation>
</comment>
<comment type="domain">
    <text evidence="4">Contains two domains, D1 and D2, which are both exposed on the surface and bind to epithelial cells.</text>
</comment>
<comment type="biotechnology">
    <text evidence="3">Was identified as a potential vaccine component (PubMed:15629361). In vitro, induces antibodies capable of neutralizing the infectivity of C.pneumoniae (PubMed:15629361).</text>
</comment>
<comment type="miscellaneous">
    <text evidence="4">This protein, although well conserved among chlamydial species, shows species-specific immunogenicity.</text>
</comment>
<comment type="similarity">
    <text evidence="6">Belongs to the bacterial solute-binding protein 3 family.</text>
</comment>
<comment type="sequence caution" evidence="6">
    <conflict type="erroneous initiation">
        <sequence resource="EMBL-CDS" id="AAP98431"/>
    </conflict>
    <text>Truncated N-terminus.</text>
</comment>
<keyword id="KW-0002">3D-structure</keyword>
<keyword id="KW-0029">Amino-acid transport</keyword>
<keyword id="KW-0964">Secreted</keyword>
<keyword id="KW-0732">Signal</keyword>
<keyword id="KW-0813">Transport</keyword>
<reference key="1">
    <citation type="journal article" date="1999" name="Nat. Genet.">
        <title>Comparative genomes of Chlamydia pneumoniae and C. trachomatis.</title>
        <authorList>
            <person name="Kalman S."/>
            <person name="Mitchell W.P."/>
            <person name="Marathe R."/>
            <person name="Lammel C.J."/>
            <person name="Fan J."/>
            <person name="Hyman R.W."/>
            <person name="Olinger L."/>
            <person name="Grimwood J."/>
            <person name="Davis R.W."/>
            <person name="Stephens R.S."/>
        </authorList>
    </citation>
    <scope>NUCLEOTIDE SEQUENCE [LARGE SCALE GENOMIC DNA]</scope>
    <source>
        <strain>CWL029</strain>
    </source>
</reference>
<reference key="2">
    <citation type="journal article" date="2000" name="Nucleic Acids Res.">
        <title>Genome sequences of Chlamydia trachomatis MoPn and Chlamydia pneumoniae AR39.</title>
        <authorList>
            <person name="Read T.D."/>
            <person name="Brunham R.C."/>
            <person name="Shen C."/>
            <person name="Gill S.R."/>
            <person name="Heidelberg J.F."/>
            <person name="White O."/>
            <person name="Hickey E.K."/>
            <person name="Peterson J.D."/>
            <person name="Utterback T.R."/>
            <person name="Berry K.J."/>
            <person name="Bass S."/>
            <person name="Linher K.D."/>
            <person name="Weidman J.F."/>
            <person name="Khouri H.M."/>
            <person name="Craven B."/>
            <person name="Bowman C."/>
            <person name="Dodson R.J."/>
            <person name="Gwinn M.L."/>
            <person name="Nelson W.C."/>
            <person name="DeBoy R.T."/>
            <person name="Kolonay J.F."/>
            <person name="McClarty G."/>
            <person name="Salzberg S.L."/>
            <person name="Eisen J.A."/>
            <person name="Fraser C.M."/>
        </authorList>
    </citation>
    <scope>NUCLEOTIDE SEQUENCE [LARGE SCALE GENOMIC DNA]</scope>
    <source>
        <strain>AR39</strain>
    </source>
</reference>
<reference key="3">
    <citation type="journal article" date="2000" name="Nucleic Acids Res.">
        <title>Comparison of whole genome sequences of Chlamydia pneumoniae J138 from Japan and CWL029 from USA.</title>
        <authorList>
            <person name="Shirai M."/>
            <person name="Hirakawa H."/>
            <person name="Kimoto M."/>
            <person name="Tabuchi M."/>
            <person name="Kishi F."/>
            <person name="Ouchi K."/>
            <person name="Shiba T."/>
            <person name="Ishii K."/>
            <person name="Hattori M."/>
            <person name="Kuhara S."/>
            <person name="Nakazawa T."/>
        </authorList>
    </citation>
    <scope>NUCLEOTIDE SEQUENCE [LARGE SCALE GENOMIC DNA]</scope>
    <source>
        <strain>J138</strain>
    </source>
</reference>
<reference key="4">
    <citation type="submission" date="2002-05" db="EMBL/GenBank/DDBJ databases">
        <title>The genome sequence of Chlamydia pneumoniae TW183 and comparison with other Chlamydia strains based on whole genome sequence analysis.</title>
        <authorList>
            <person name="Geng M.M."/>
            <person name="Schuhmacher A."/>
            <person name="Muehldorfer I."/>
            <person name="Bensch K.W."/>
            <person name="Schaefer K.P."/>
            <person name="Schneider S."/>
            <person name="Pohl T."/>
            <person name="Essig A."/>
            <person name="Marre R."/>
            <person name="Melchers K."/>
        </authorList>
    </citation>
    <scope>NUCLEOTIDE SEQUENCE [LARGE SCALE GENOMIC DNA]</scope>
    <source>
        <strain>TW-183</strain>
    </source>
</reference>
<reference key="5">
    <citation type="journal article" date="2005" name="Vaccine">
        <title>Identification of new potential vaccine candidates against Chlamydia pneumoniae by multiple screenings.</title>
        <authorList>
            <person name="Finco O."/>
            <person name="Bonci A."/>
            <person name="Agnusdei M."/>
            <person name="Scarselli M."/>
            <person name="Petracca R."/>
            <person name="Norais N."/>
            <person name="Ferrari G."/>
            <person name="Garaguso I."/>
            <person name="Donati M."/>
            <person name="Sambri V."/>
            <person name="Cevenini R."/>
            <person name="Ratti G."/>
            <person name="Grandi G."/>
        </authorList>
    </citation>
    <scope>SUBCELLULAR LOCATION</scope>
    <scope>BIOTECHNOLOGY</scope>
    <source>
        <strain>FB/96</strain>
    </source>
</reference>
<reference evidence="7" key="6">
    <citation type="journal article" date="2010" name="J. Biol. Chem.">
        <title>Exploiting antigenic diversity for vaccine design: the chlamydia ArtJ paradigm.</title>
        <authorList>
            <person name="Soriani M."/>
            <person name="Petit P."/>
            <person name="Grifantini R."/>
            <person name="Petracca R."/>
            <person name="Gancitano G."/>
            <person name="Frigimelica E."/>
            <person name="Nardelli F."/>
            <person name="Garcia C."/>
            <person name="Spinelli S."/>
            <person name="Scarabelli G."/>
            <person name="Fiorucci S."/>
            <person name="Affentranger R."/>
            <person name="Ferrer-Navarro M."/>
            <person name="Zacharias M."/>
            <person name="Colombo G."/>
            <person name="Vuillard L."/>
            <person name="Daura X."/>
            <person name="Grandi G."/>
        </authorList>
    </citation>
    <scope>X-RAY CRYSTALLOGRAPHY (2.1 ANGSTROMS) OF 23-259 IN COMPLEX WITH ARGININE</scope>
    <scope>FUNCTION</scope>
    <scope>DOMAIN</scope>
    <scope>SPECIES-SPECIFIC IMMUNOGENICITY</scope>
    <source>
        <strain>FB/96</strain>
    </source>
</reference>
<reference evidence="8" key="7">
    <citation type="submission" date="2011-01" db="PDB data bank">
        <title>Crystal structure of the cpb0502.</title>
        <authorList>
            <person name="Chang J.E."/>
            <person name="Hwang K.Y."/>
        </authorList>
    </citation>
    <scope>X-RAY CRYSTALLOGRAPHY (2.00 ANGSTROMS) IN COMPLEX WITH ARGININE</scope>
</reference>